<proteinExistence type="evidence at protein level"/>
<dbReference type="EMBL" id="BA000018">
    <property type="protein sequence ID" value="BAB43310.1"/>
    <property type="molecule type" value="Genomic_DNA"/>
</dbReference>
<dbReference type="PIR" id="E90018">
    <property type="entry name" value="E90018"/>
</dbReference>
<dbReference type="RefSeq" id="WP_001250038.1">
    <property type="nucleotide sequence ID" value="NC_002745.2"/>
</dbReference>
<dbReference type="SMR" id="Q7A473"/>
<dbReference type="EnsemblBacteria" id="BAB43310">
    <property type="protein sequence ID" value="BAB43310"/>
    <property type="gene ID" value="BAB43310"/>
</dbReference>
<dbReference type="GeneID" id="98346530"/>
<dbReference type="KEGG" id="sau:SA2017"/>
<dbReference type="HOGENOM" id="CLU_082184_2_2_9"/>
<dbReference type="GO" id="GO:0022625">
    <property type="term" value="C:cytosolic large ribosomal subunit"/>
    <property type="evidence" value="ECO:0007669"/>
    <property type="project" value="TreeGrafter"/>
</dbReference>
<dbReference type="GO" id="GO:0003729">
    <property type="term" value="F:mRNA binding"/>
    <property type="evidence" value="ECO:0007669"/>
    <property type="project" value="TreeGrafter"/>
</dbReference>
<dbReference type="GO" id="GO:0003735">
    <property type="term" value="F:structural constituent of ribosome"/>
    <property type="evidence" value="ECO:0007669"/>
    <property type="project" value="InterPro"/>
</dbReference>
<dbReference type="GO" id="GO:0017148">
    <property type="term" value="P:negative regulation of translation"/>
    <property type="evidence" value="ECO:0007669"/>
    <property type="project" value="TreeGrafter"/>
</dbReference>
<dbReference type="GO" id="GO:0006412">
    <property type="term" value="P:translation"/>
    <property type="evidence" value="ECO:0007669"/>
    <property type="project" value="UniProtKB-UniRule"/>
</dbReference>
<dbReference type="CDD" id="cd00392">
    <property type="entry name" value="Ribosomal_L13"/>
    <property type="match status" value="1"/>
</dbReference>
<dbReference type="FunFam" id="3.90.1180.10:FF:000001">
    <property type="entry name" value="50S ribosomal protein L13"/>
    <property type="match status" value="1"/>
</dbReference>
<dbReference type="Gene3D" id="3.90.1180.10">
    <property type="entry name" value="Ribosomal protein L13"/>
    <property type="match status" value="1"/>
</dbReference>
<dbReference type="HAMAP" id="MF_01366">
    <property type="entry name" value="Ribosomal_uL13"/>
    <property type="match status" value="1"/>
</dbReference>
<dbReference type="InterPro" id="IPR005822">
    <property type="entry name" value="Ribosomal_uL13"/>
</dbReference>
<dbReference type="InterPro" id="IPR005823">
    <property type="entry name" value="Ribosomal_uL13_bac-type"/>
</dbReference>
<dbReference type="InterPro" id="IPR023563">
    <property type="entry name" value="Ribosomal_uL13_CS"/>
</dbReference>
<dbReference type="InterPro" id="IPR036899">
    <property type="entry name" value="Ribosomal_uL13_sf"/>
</dbReference>
<dbReference type="NCBIfam" id="TIGR01066">
    <property type="entry name" value="rplM_bact"/>
    <property type="match status" value="1"/>
</dbReference>
<dbReference type="PANTHER" id="PTHR11545:SF2">
    <property type="entry name" value="LARGE RIBOSOMAL SUBUNIT PROTEIN UL13M"/>
    <property type="match status" value="1"/>
</dbReference>
<dbReference type="PANTHER" id="PTHR11545">
    <property type="entry name" value="RIBOSOMAL PROTEIN L13"/>
    <property type="match status" value="1"/>
</dbReference>
<dbReference type="Pfam" id="PF00572">
    <property type="entry name" value="Ribosomal_L13"/>
    <property type="match status" value="1"/>
</dbReference>
<dbReference type="PIRSF" id="PIRSF002181">
    <property type="entry name" value="Ribosomal_L13"/>
    <property type="match status" value="1"/>
</dbReference>
<dbReference type="SUPFAM" id="SSF52161">
    <property type="entry name" value="Ribosomal protein L13"/>
    <property type="match status" value="1"/>
</dbReference>
<dbReference type="PROSITE" id="PS00783">
    <property type="entry name" value="RIBOSOMAL_L13"/>
    <property type="match status" value="1"/>
</dbReference>
<comment type="function">
    <text evidence="1">This protein is one of the early assembly proteins of the 50S ribosomal subunit, although it is not seen to bind rRNA by itself. It is important during the early stages of 50S assembly.</text>
</comment>
<comment type="subunit">
    <text evidence="1">Part of the 50S ribosomal subunit.</text>
</comment>
<comment type="similarity">
    <text evidence="1">Belongs to the universal ribosomal protein uL13 family.</text>
</comment>
<keyword id="KW-0687">Ribonucleoprotein</keyword>
<keyword id="KW-0689">Ribosomal protein</keyword>
<organism>
    <name type="scientific">Staphylococcus aureus (strain N315)</name>
    <dbReference type="NCBI Taxonomy" id="158879"/>
    <lineage>
        <taxon>Bacteria</taxon>
        <taxon>Bacillati</taxon>
        <taxon>Bacillota</taxon>
        <taxon>Bacilli</taxon>
        <taxon>Bacillales</taxon>
        <taxon>Staphylococcaceae</taxon>
        <taxon>Staphylococcus</taxon>
    </lineage>
</organism>
<accession>Q7A473</accession>
<evidence type="ECO:0000255" key="1">
    <source>
        <dbReference type="HAMAP-Rule" id="MF_01366"/>
    </source>
</evidence>
<evidence type="ECO:0000305" key="2"/>
<reference key="1">
    <citation type="journal article" date="2001" name="Lancet">
        <title>Whole genome sequencing of meticillin-resistant Staphylococcus aureus.</title>
        <authorList>
            <person name="Kuroda M."/>
            <person name="Ohta T."/>
            <person name="Uchiyama I."/>
            <person name="Baba T."/>
            <person name="Yuzawa H."/>
            <person name="Kobayashi I."/>
            <person name="Cui L."/>
            <person name="Oguchi A."/>
            <person name="Aoki K."/>
            <person name="Nagai Y."/>
            <person name="Lian J.-Q."/>
            <person name="Ito T."/>
            <person name="Kanamori M."/>
            <person name="Matsumaru H."/>
            <person name="Maruyama A."/>
            <person name="Murakami H."/>
            <person name="Hosoyama A."/>
            <person name="Mizutani-Ui Y."/>
            <person name="Takahashi N.K."/>
            <person name="Sawano T."/>
            <person name="Inoue R."/>
            <person name="Kaito C."/>
            <person name="Sekimizu K."/>
            <person name="Hirakawa H."/>
            <person name="Kuhara S."/>
            <person name="Goto S."/>
            <person name="Yabuzaki J."/>
            <person name="Kanehisa M."/>
            <person name="Yamashita A."/>
            <person name="Oshima K."/>
            <person name="Furuya K."/>
            <person name="Yoshino C."/>
            <person name="Shiba T."/>
            <person name="Hattori M."/>
            <person name="Ogasawara N."/>
            <person name="Hayashi H."/>
            <person name="Hiramatsu K."/>
        </authorList>
    </citation>
    <scope>NUCLEOTIDE SEQUENCE [LARGE SCALE GENOMIC DNA]</scope>
    <source>
        <strain>N315</strain>
    </source>
</reference>
<reference key="2">
    <citation type="submission" date="2007-10" db="UniProtKB">
        <title>Shotgun proteomic analysis of total and membrane protein extracts of S. aureus strain N315.</title>
        <authorList>
            <person name="Vaezzadeh A.R."/>
            <person name="Deshusses J."/>
            <person name="Lescuyer P."/>
            <person name="Hochstrasser D.F."/>
        </authorList>
    </citation>
    <scope>IDENTIFICATION BY MASS SPECTROMETRY [LARGE SCALE ANALYSIS]</scope>
    <source>
        <strain>N315</strain>
    </source>
</reference>
<gene>
    <name evidence="1" type="primary">rplM</name>
    <name type="ordered locus">SA2017</name>
</gene>
<sequence>MRQTFMANESNIERKWYVIDAEGQTLGRLSSEVASILRGKNKVTYTPHVDTGDYVIVINASKIEFTGNKETDKVYYRHSNHPGGIKSITAGELRRTNPERLIENSIKGMLPSTRLGEKQGKKLFVYGGAEHPHAAQQPENYELRG</sequence>
<name>RL13_STAAN</name>
<protein>
    <recommendedName>
        <fullName evidence="1">Large ribosomal subunit protein uL13</fullName>
    </recommendedName>
    <alternativeName>
        <fullName evidence="2">50S ribosomal protein L13</fullName>
    </alternativeName>
</protein>
<feature type="chain" id="PRO_0000223976" description="Large ribosomal subunit protein uL13">
    <location>
        <begin position="1"/>
        <end position="145"/>
    </location>
</feature>